<comment type="function">
    <text evidence="1">Thiol-disulfide oxidoreductase which is required in disulfide reduction during c-type cytochrome synthesis. May accept reducing equivalents from CcdA, leading to breakage of disulfide bonds in apocytochrome c; following this reduction heme can be covalently attached.</text>
</comment>
<comment type="pathway">
    <text evidence="1">Protein modification; cytochrome c assembly.</text>
</comment>
<comment type="subcellular location">
    <subcellularLocation>
        <location evidence="1">Cell membrane</location>
        <topology evidence="1">Single-pass type II membrane protein</topology>
    </subcellularLocation>
    <text evidence="1">The thioredoxin-like motif is exposed on the outside of the membrane.</text>
</comment>
<comment type="similarity">
    <text evidence="1">Belongs to the thioredoxin family. ResA subfamily.</text>
</comment>
<accession>Q63DQ8</accession>
<dbReference type="EMBL" id="CP000001">
    <property type="protein sequence ID" value="AAU18893.1"/>
    <property type="molecule type" value="Genomic_DNA"/>
</dbReference>
<dbReference type="RefSeq" id="WP_000742191.1">
    <property type="nucleotide sequence ID" value="NZ_CP009968.1"/>
</dbReference>
<dbReference type="SMR" id="Q63DQ8"/>
<dbReference type="KEGG" id="bcz:BCE33L1355"/>
<dbReference type="PATRIC" id="fig|288681.22.peg.4197"/>
<dbReference type="UniPathway" id="UPA00555"/>
<dbReference type="Proteomes" id="UP000002612">
    <property type="component" value="Chromosome"/>
</dbReference>
<dbReference type="GO" id="GO:0005886">
    <property type="term" value="C:plasma membrane"/>
    <property type="evidence" value="ECO:0007669"/>
    <property type="project" value="UniProtKB-SubCell"/>
</dbReference>
<dbReference type="GO" id="GO:0016209">
    <property type="term" value="F:antioxidant activity"/>
    <property type="evidence" value="ECO:0007669"/>
    <property type="project" value="InterPro"/>
</dbReference>
<dbReference type="GO" id="GO:0015036">
    <property type="term" value="F:disulfide oxidoreductase activity"/>
    <property type="evidence" value="ECO:0007669"/>
    <property type="project" value="UniProtKB-UniRule"/>
</dbReference>
<dbReference type="GO" id="GO:0017004">
    <property type="term" value="P:cytochrome complex assembly"/>
    <property type="evidence" value="ECO:0007669"/>
    <property type="project" value="UniProtKB-UniRule"/>
</dbReference>
<dbReference type="CDD" id="cd02966">
    <property type="entry name" value="TlpA_like_family"/>
    <property type="match status" value="1"/>
</dbReference>
<dbReference type="Gene3D" id="3.40.30.10">
    <property type="entry name" value="Glutaredoxin"/>
    <property type="match status" value="1"/>
</dbReference>
<dbReference type="HAMAP" id="MF_01319">
    <property type="entry name" value="ResA"/>
    <property type="match status" value="1"/>
</dbReference>
<dbReference type="InterPro" id="IPR000866">
    <property type="entry name" value="AhpC/TSA"/>
</dbReference>
<dbReference type="InterPro" id="IPR023555">
    <property type="entry name" value="Thiol-dS_OxRdtase_ResA"/>
</dbReference>
<dbReference type="InterPro" id="IPR036249">
    <property type="entry name" value="Thioredoxin-like_sf"/>
</dbReference>
<dbReference type="InterPro" id="IPR013766">
    <property type="entry name" value="Thioredoxin_domain"/>
</dbReference>
<dbReference type="InterPro" id="IPR050553">
    <property type="entry name" value="Thioredoxin_ResA/DsbE_sf"/>
</dbReference>
<dbReference type="NCBIfam" id="NF002854">
    <property type="entry name" value="PRK03147.1"/>
    <property type="match status" value="1"/>
</dbReference>
<dbReference type="PANTHER" id="PTHR42852">
    <property type="entry name" value="THIOL:DISULFIDE INTERCHANGE PROTEIN DSBE"/>
    <property type="match status" value="1"/>
</dbReference>
<dbReference type="PANTHER" id="PTHR42852:SF6">
    <property type="entry name" value="THIOL:DISULFIDE INTERCHANGE PROTEIN DSBE"/>
    <property type="match status" value="1"/>
</dbReference>
<dbReference type="Pfam" id="PF00578">
    <property type="entry name" value="AhpC-TSA"/>
    <property type="match status" value="1"/>
</dbReference>
<dbReference type="SUPFAM" id="SSF52833">
    <property type="entry name" value="Thioredoxin-like"/>
    <property type="match status" value="1"/>
</dbReference>
<dbReference type="PROSITE" id="PS51352">
    <property type="entry name" value="THIOREDOXIN_2"/>
    <property type="match status" value="1"/>
</dbReference>
<feature type="chain" id="PRO_0000120147" description="Thiol-disulfide oxidoreductase ResA">
    <location>
        <begin position="1"/>
        <end position="173"/>
    </location>
</feature>
<feature type="transmembrane region" description="Helical; Signal-anchor for type II membrane protein" evidence="1">
    <location>
        <begin position="10"/>
        <end position="29"/>
    </location>
</feature>
<feature type="domain" description="Thioredoxin" evidence="1">
    <location>
        <begin position="35"/>
        <end position="173"/>
    </location>
</feature>
<feature type="disulfide bond" description="Redox-active" evidence="1">
    <location>
        <begin position="73"/>
        <end position="76"/>
    </location>
</feature>
<gene>
    <name evidence="1" type="primary">resA</name>
    <name type="ordered locus">BCE33L1355</name>
</gene>
<keyword id="KW-1003">Cell membrane</keyword>
<keyword id="KW-0201">Cytochrome c-type biogenesis</keyword>
<keyword id="KW-1015">Disulfide bond</keyword>
<keyword id="KW-0472">Membrane</keyword>
<keyword id="KW-0560">Oxidoreductase</keyword>
<keyword id="KW-0676">Redox-active center</keyword>
<keyword id="KW-0735">Signal-anchor</keyword>
<keyword id="KW-0812">Transmembrane</keyword>
<keyword id="KW-1133">Transmembrane helix</keyword>
<name>RESA_BACCZ</name>
<protein>
    <recommendedName>
        <fullName evidence="1">Thiol-disulfide oxidoreductase ResA</fullName>
    </recommendedName>
</protein>
<proteinExistence type="inferred from homology"/>
<reference key="1">
    <citation type="journal article" date="2006" name="J. Bacteriol.">
        <title>Pathogenomic sequence analysis of Bacillus cereus and Bacillus thuringiensis isolates closely related to Bacillus anthracis.</title>
        <authorList>
            <person name="Han C.S."/>
            <person name="Xie G."/>
            <person name="Challacombe J.F."/>
            <person name="Altherr M.R."/>
            <person name="Bhotika S.S."/>
            <person name="Bruce D."/>
            <person name="Campbell C.S."/>
            <person name="Campbell M.L."/>
            <person name="Chen J."/>
            <person name="Chertkov O."/>
            <person name="Cleland C."/>
            <person name="Dimitrijevic M."/>
            <person name="Doggett N.A."/>
            <person name="Fawcett J.J."/>
            <person name="Glavina T."/>
            <person name="Goodwin L.A."/>
            <person name="Hill K.K."/>
            <person name="Hitchcock P."/>
            <person name="Jackson P.J."/>
            <person name="Keim P."/>
            <person name="Kewalramani A.R."/>
            <person name="Longmire J."/>
            <person name="Lucas S."/>
            <person name="Malfatti S."/>
            <person name="McMurry K."/>
            <person name="Meincke L.J."/>
            <person name="Misra M."/>
            <person name="Moseman B.L."/>
            <person name="Mundt M."/>
            <person name="Munk A.C."/>
            <person name="Okinaka R.T."/>
            <person name="Parson-Quintana B."/>
            <person name="Reilly L.P."/>
            <person name="Richardson P."/>
            <person name="Robinson D.L."/>
            <person name="Rubin E."/>
            <person name="Saunders E."/>
            <person name="Tapia R."/>
            <person name="Tesmer J.G."/>
            <person name="Thayer N."/>
            <person name="Thompson L.S."/>
            <person name="Tice H."/>
            <person name="Ticknor L.O."/>
            <person name="Wills P.L."/>
            <person name="Brettin T.S."/>
            <person name="Gilna P."/>
        </authorList>
    </citation>
    <scope>NUCLEOTIDE SEQUENCE [LARGE SCALE GENOMIC DNA]</scope>
    <source>
        <strain>ZK / E33L</strain>
    </source>
</reference>
<organism>
    <name type="scientific">Bacillus cereus (strain ZK / E33L)</name>
    <dbReference type="NCBI Taxonomy" id="288681"/>
    <lineage>
        <taxon>Bacteria</taxon>
        <taxon>Bacillati</taxon>
        <taxon>Bacillota</taxon>
        <taxon>Bacilli</taxon>
        <taxon>Bacillales</taxon>
        <taxon>Bacillaceae</taxon>
        <taxon>Bacillus</taxon>
        <taxon>Bacillus cereus group</taxon>
    </lineage>
</organism>
<evidence type="ECO:0000255" key="1">
    <source>
        <dbReference type="HAMAP-Rule" id="MF_01319"/>
    </source>
</evidence>
<sequence length="173" mass="19692">MKKNRLLFRVIILLILCGAVGFTLYQGFFADKEKMQIGKEAPNFVVTDLEGKKIELKDLKGKGVFLNFWGTWCKPCEKEMPYMNELYPKYKEKGVEIIALDADETEIAVKNFVKQYDLKFPVAIDKGTKIIGTYSVGPLPTSFLIDKDGKVVEKIIGEQTKEQLEGYLQKITP</sequence>